<keyword id="KW-0030">Aminoacyl-tRNA synthetase</keyword>
<keyword id="KW-0067">ATP-binding</keyword>
<keyword id="KW-0963">Cytoplasm</keyword>
<keyword id="KW-0436">Ligase</keyword>
<keyword id="KW-0547">Nucleotide-binding</keyword>
<keyword id="KW-0648">Protein biosynthesis</keyword>
<accession>Q5L735</accession>
<evidence type="ECO:0000255" key="1">
    <source>
        <dbReference type="HAMAP-Rule" id="MF_00127"/>
    </source>
</evidence>
<comment type="catalytic activity">
    <reaction evidence="1">
        <text>tRNA(His) + L-histidine + ATP = L-histidyl-tRNA(His) + AMP + diphosphate + H(+)</text>
        <dbReference type="Rhea" id="RHEA:17313"/>
        <dbReference type="Rhea" id="RHEA-COMP:9665"/>
        <dbReference type="Rhea" id="RHEA-COMP:9689"/>
        <dbReference type="ChEBI" id="CHEBI:15378"/>
        <dbReference type="ChEBI" id="CHEBI:30616"/>
        <dbReference type="ChEBI" id="CHEBI:33019"/>
        <dbReference type="ChEBI" id="CHEBI:57595"/>
        <dbReference type="ChEBI" id="CHEBI:78442"/>
        <dbReference type="ChEBI" id="CHEBI:78527"/>
        <dbReference type="ChEBI" id="CHEBI:456215"/>
        <dbReference type="EC" id="6.1.1.21"/>
    </reaction>
</comment>
<comment type="subunit">
    <text evidence="1">Homodimer.</text>
</comment>
<comment type="subcellular location">
    <subcellularLocation>
        <location evidence="1">Cytoplasm</location>
    </subcellularLocation>
</comment>
<comment type="similarity">
    <text evidence="1">Belongs to the class-II aminoacyl-tRNA synthetase family.</text>
</comment>
<organism>
    <name type="scientific">Chlamydia abortus (strain DSM 27085 / S26/3)</name>
    <name type="common">Chlamydophila abortus</name>
    <dbReference type="NCBI Taxonomy" id="218497"/>
    <lineage>
        <taxon>Bacteria</taxon>
        <taxon>Pseudomonadati</taxon>
        <taxon>Chlamydiota</taxon>
        <taxon>Chlamydiia</taxon>
        <taxon>Chlamydiales</taxon>
        <taxon>Chlamydiaceae</taxon>
        <taxon>Chlamydia/Chlamydophila group</taxon>
        <taxon>Chlamydia</taxon>
    </lineage>
</organism>
<feature type="chain" id="PRO_0000136137" description="Histidine--tRNA ligase">
    <location>
        <begin position="1"/>
        <end position="430"/>
    </location>
</feature>
<sequence length="430" mass="49386">MKVALPKGVFDIFPYITDAKHMWRHTSLWHRVEDVIHDVCGLYGFSEIRTPVFEKSEVFLHVGEQSDIVKKEMYTFLDKKGRSLTLRPEGTAPIVRSFIDNSMNQRDDNKFYYILPMFRYERQQSGRYRQHHQFGVEAIGVRHPLRDAEILALLWHFYSAVGLQHMQVQLNFLGGEVTRKRYDKILREYFLDHLSSLSLLSKERFNTNLLRILDSKEPEDQEIIQSAPPILDYVSDDDRKYFDEILSALDALNIAYDINPRLVRGLDYYTDLVFEAITTCRDHSYALGGGGRYDGLIASSGGPATPACGFGIGLERVIQTLLAQGNFTPLSSHKLRLIPVESQADSFCFVWAQHLRSLGIPTEVDWTHKKLKNALKIADAEKATFVCPVGERELVSEQLTVKNMSLRQEFSGSKQEVEQRLLYEIQNTSL</sequence>
<protein>
    <recommendedName>
        <fullName evidence="1">Histidine--tRNA ligase</fullName>
        <ecNumber evidence="1">6.1.1.21</ecNumber>
    </recommendedName>
    <alternativeName>
        <fullName evidence="1">Histidyl-tRNA synthetase</fullName>
        <shortName evidence="1">HisRS</shortName>
    </alternativeName>
</protein>
<reference key="1">
    <citation type="journal article" date="2005" name="Genome Res.">
        <title>The Chlamydophila abortus genome sequence reveals an array of variable proteins that contribute to interspecies variation.</title>
        <authorList>
            <person name="Thomson N.R."/>
            <person name="Yeats C."/>
            <person name="Bell K."/>
            <person name="Holden M.T.G."/>
            <person name="Bentley S.D."/>
            <person name="Livingstone M."/>
            <person name="Cerdeno-Tarraga A.-M."/>
            <person name="Harris B."/>
            <person name="Doggett J."/>
            <person name="Ormond D."/>
            <person name="Mungall K."/>
            <person name="Clarke K."/>
            <person name="Feltwell T."/>
            <person name="Hance Z."/>
            <person name="Sanders M."/>
            <person name="Quail M.A."/>
            <person name="Price C."/>
            <person name="Barrell B.G."/>
            <person name="Parkhill J."/>
            <person name="Longbottom D."/>
        </authorList>
    </citation>
    <scope>NUCLEOTIDE SEQUENCE [LARGE SCALE GENOMIC DNA]</scope>
    <source>
        <strain>DSM 27085 / S26/3</strain>
    </source>
</reference>
<dbReference type="EC" id="6.1.1.21" evidence="1"/>
<dbReference type="EMBL" id="CR848038">
    <property type="protein sequence ID" value="CAH63535.1"/>
    <property type="molecule type" value="Genomic_DNA"/>
</dbReference>
<dbReference type="RefSeq" id="WP_011096817.1">
    <property type="nucleotide sequence ID" value="NC_004552.2"/>
</dbReference>
<dbReference type="SMR" id="Q5L735"/>
<dbReference type="KEGG" id="cab:CAB078"/>
<dbReference type="eggNOG" id="COG0124">
    <property type="taxonomic scope" value="Bacteria"/>
</dbReference>
<dbReference type="HOGENOM" id="CLU_025113_1_1_0"/>
<dbReference type="OrthoDB" id="9800814at2"/>
<dbReference type="Proteomes" id="UP000001012">
    <property type="component" value="Chromosome"/>
</dbReference>
<dbReference type="GO" id="GO:0005737">
    <property type="term" value="C:cytoplasm"/>
    <property type="evidence" value="ECO:0007669"/>
    <property type="project" value="UniProtKB-SubCell"/>
</dbReference>
<dbReference type="GO" id="GO:0005524">
    <property type="term" value="F:ATP binding"/>
    <property type="evidence" value="ECO:0007669"/>
    <property type="project" value="UniProtKB-UniRule"/>
</dbReference>
<dbReference type="GO" id="GO:0004821">
    <property type="term" value="F:histidine-tRNA ligase activity"/>
    <property type="evidence" value="ECO:0007669"/>
    <property type="project" value="UniProtKB-UniRule"/>
</dbReference>
<dbReference type="GO" id="GO:0006427">
    <property type="term" value="P:histidyl-tRNA aminoacylation"/>
    <property type="evidence" value="ECO:0007669"/>
    <property type="project" value="UniProtKB-UniRule"/>
</dbReference>
<dbReference type="CDD" id="cd00773">
    <property type="entry name" value="HisRS-like_core"/>
    <property type="match status" value="1"/>
</dbReference>
<dbReference type="FunFam" id="3.30.930.10:FF:000166">
    <property type="entry name" value="Histidine--tRNA ligase"/>
    <property type="match status" value="1"/>
</dbReference>
<dbReference type="Gene3D" id="3.40.50.800">
    <property type="entry name" value="Anticodon-binding domain"/>
    <property type="match status" value="1"/>
</dbReference>
<dbReference type="Gene3D" id="3.30.930.10">
    <property type="entry name" value="Bira Bifunctional Protein, Domain 2"/>
    <property type="match status" value="1"/>
</dbReference>
<dbReference type="HAMAP" id="MF_00127">
    <property type="entry name" value="His_tRNA_synth"/>
    <property type="match status" value="1"/>
</dbReference>
<dbReference type="InterPro" id="IPR006195">
    <property type="entry name" value="aa-tRNA-synth_II"/>
</dbReference>
<dbReference type="InterPro" id="IPR045864">
    <property type="entry name" value="aa-tRNA-synth_II/BPL/LPL"/>
</dbReference>
<dbReference type="InterPro" id="IPR004154">
    <property type="entry name" value="Anticodon-bd"/>
</dbReference>
<dbReference type="InterPro" id="IPR036621">
    <property type="entry name" value="Anticodon-bd_dom_sf"/>
</dbReference>
<dbReference type="InterPro" id="IPR015807">
    <property type="entry name" value="His-tRNA-ligase"/>
</dbReference>
<dbReference type="InterPro" id="IPR041715">
    <property type="entry name" value="HisRS-like_core"/>
</dbReference>
<dbReference type="InterPro" id="IPR004516">
    <property type="entry name" value="HisRS/HisZ"/>
</dbReference>
<dbReference type="NCBIfam" id="TIGR00442">
    <property type="entry name" value="hisS"/>
    <property type="match status" value="1"/>
</dbReference>
<dbReference type="PANTHER" id="PTHR43707:SF1">
    <property type="entry name" value="HISTIDINE--TRNA LIGASE, MITOCHONDRIAL-RELATED"/>
    <property type="match status" value="1"/>
</dbReference>
<dbReference type="PANTHER" id="PTHR43707">
    <property type="entry name" value="HISTIDYL-TRNA SYNTHETASE"/>
    <property type="match status" value="1"/>
</dbReference>
<dbReference type="Pfam" id="PF03129">
    <property type="entry name" value="HGTP_anticodon"/>
    <property type="match status" value="1"/>
</dbReference>
<dbReference type="Pfam" id="PF13393">
    <property type="entry name" value="tRNA-synt_His"/>
    <property type="match status" value="1"/>
</dbReference>
<dbReference type="PIRSF" id="PIRSF001549">
    <property type="entry name" value="His-tRNA_synth"/>
    <property type="match status" value="1"/>
</dbReference>
<dbReference type="SUPFAM" id="SSF52954">
    <property type="entry name" value="Class II aaRS ABD-related"/>
    <property type="match status" value="1"/>
</dbReference>
<dbReference type="SUPFAM" id="SSF55681">
    <property type="entry name" value="Class II aaRS and biotin synthetases"/>
    <property type="match status" value="1"/>
</dbReference>
<dbReference type="PROSITE" id="PS50862">
    <property type="entry name" value="AA_TRNA_LIGASE_II"/>
    <property type="match status" value="1"/>
</dbReference>
<name>SYH_CHLAB</name>
<gene>
    <name evidence="1" type="primary">hisS</name>
    <name type="ordered locus">CAB078</name>
</gene>
<proteinExistence type="inferred from homology"/>